<organism>
    <name type="scientific">Escherichia coli (strain K12)</name>
    <dbReference type="NCBI Taxonomy" id="83333"/>
    <lineage>
        <taxon>Bacteria</taxon>
        <taxon>Pseudomonadati</taxon>
        <taxon>Pseudomonadota</taxon>
        <taxon>Gammaproteobacteria</taxon>
        <taxon>Enterobacterales</taxon>
        <taxon>Enterobacteriaceae</taxon>
        <taxon>Escherichia</taxon>
    </lineage>
</organism>
<proteinExistence type="inferred from homology"/>
<gene>
    <name type="primary">yphH</name>
    <name type="ordered locus">b2550</name>
    <name type="ordered locus">JW5406</name>
</gene>
<reference key="1">
    <citation type="journal article" date="1997" name="DNA Res.">
        <title>Construction of a contiguous 874-kb sequence of the Escherichia coli-K12 genome corresponding to 50.0-68.8 min on the linkage map and analysis of its sequence features.</title>
        <authorList>
            <person name="Yamamoto Y."/>
            <person name="Aiba H."/>
            <person name="Baba T."/>
            <person name="Hayashi K."/>
            <person name="Inada T."/>
            <person name="Isono K."/>
            <person name="Itoh T."/>
            <person name="Kimura S."/>
            <person name="Kitagawa M."/>
            <person name="Makino K."/>
            <person name="Miki T."/>
            <person name="Mitsuhashi N."/>
            <person name="Mizobuchi K."/>
            <person name="Mori H."/>
            <person name="Nakade S."/>
            <person name="Nakamura Y."/>
            <person name="Nashimoto H."/>
            <person name="Oshima T."/>
            <person name="Oyama S."/>
            <person name="Saito N."/>
            <person name="Sampei G."/>
            <person name="Satoh Y."/>
            <person name="Sivasundaram S."/>
            <person name="Tagami H."/>
            <person name="Takahashi H."/>
            <person name="Takeda J."/>
            <person name="Takemoto K."/>
            <person name="Uehara K."/>
            <person name="Wada C."/>
            <person name="Yamagata S."/>
            <person name="Horiuchi T."/>
        </authorList>
    </citation>
    <scope>NUCLEOTIDE SEQUENCE [LARGE SCALE GENOMIC DNA]</scope>
    <source>
        <strain>K12 / W3110 / ATCC 27325 / DSM 5911</strain>
    </source>
</reference>
<reference key="2">
    <citation type="journal article" date="1997" name="Science">
        <title>The complete genome sequence of Escherichia coli K-12.</title>
        <authorList>
            <person name="Blattner F.R."/>
            <person name="Plunkett G. III"/>
            <person name="Bloch C.A."/>
            <person name="Perna N.T."/>
            <person name="Burland V."/>
            <person name="Riley M."/>
            <person name="Collado-Vides J."/>
            <person name="Glasner J.D."/>
            <person name="Rode C.K."/>
            <person name="Mayhew G.F."/>
            <person name="Gregor J."/>
            <person name="Davis N.W."/>
            <person name="Kirkpatrick H.A."/>
            <person name="Goeden M.A."/>
            <person name="Rose D.J."/>
            <person name="Mau B."/>
            <person name="Shao Y."/>
        </authorList>
    </citation>
    <scope>NUCLEOTIDE SEQUENCE [LARGE SCALE GENOMIC DNA]</scope>
    <source>
        <strain>K12 / MG1655 / ATCC 47076</strain>
    </source>
</reference>
<reference key="3">
    <citation type="journal article" date="2006" name="Mol. Syst. Biol.">
        <title>Highly accurate genome sequences of Escherichia coli K-12 strains MG1655 and W3110.</title>
        <authorList>
            <person name="Hayashi K."/>
            <person name="Morooka N."/>
            <person name="Yamamoto Y."/>
            <person name="Fujita K."/>
            <person name="Isono K."/>
            <person name="Choi S."/>
            <person name="Ohtsubo E."/>
            <person name="Baba T."/>
            <person name="Wanner B.L."/>
            <person name="Mori H."/>
            <person name="Horiuchi T."/>
        </authorList>
    </citation>
    <scope>NUCLEOTIDE SEQUENCE [LARGE SCALE GENOMIC DNA]</scope>
    <scope>SEQUENCE REVISION</scope>
    <source>
        <strain>K12 / W3110 / ATCC 27325 / DSM 5911</strain>
    </source>
</reference>
<evidence type="ECO:0000305" key="1"/>
<accession>P76586</accession>
<accession>P76996</accession>
<comment type="similarity">
    <text evidence="1">Belongs to the ROK (NagC/XylR) family.</text>
</comment>
<sequence>MRACINNQQIRHHNKCVILELLYRQKRANKSTLARLAQISIPAVSNILQELESEKRVVNIDDESQTRGHSSGTWLIAPEGDWTLCLNVTPTSIECQVANACLSPKGEFEYLQIDAPTPQALLSEIEKCWHRHRKLWPDHTINLALAIHGQVDPVTGVSQTMPQAPWTTPVEVKYLLEEKLGIRVMVDNDCVMLALAEKWQNNSQERDFCVINVDYGIGSSFVINEQIYRGSLYGSGQIGHTIVNPDGVVCDCGRYGCLETVASLSALKKQARVWLKSQPVSTQLDPEKLTTAQLIAAWQSGEPWITSWVDRSANAIGLSLYNFLNILNINQIWLYGRSCAFGENWLNTIIRQTGFNPFDRDEGPSVKATQIGFGQLSRAQQVLGIGYLYVEAQLRQI</sequence>
<dbReference type="EMBL" id="U00096">
    <property type="protein sequence ID" value="AAC75603.2"/>
    <property type="molecule type" value="Genomic_DNA"/>
</dbReference>
<dbReference type="EMBL" id="AP009048">
    <property type="protein sequence ID" value="BAA16458.2"/>
    <property type="molecule type" value="Genomic_DNA"/>
</dbReference>
<dbReference type="PIR" id="E65032">
    <property type="entry name" value="E65032"/>
</dbReference>
<dbReference type="RefSeq" id="NP_417045.4">
    <property type="nucleotide sequence ID" value="NC_000913.3"/>
</dbReference>
<dbReference type="RefSeq" id="WP_001200769.1">
    <property type="nucleotide sequence ID" value="NZ_LN832404.1"/>
</dbReference>
<dbReference type="SMR" id="P76586"/>
<dbReference type="BioGRID" id="4261312">
    <property type="interactions" value="81"/>
</dbReference>
<dbReference type="DIP" id="DIP-12833N"/>
<dbReference type="FunCoup" id="P76586">
    <property type="interactions" value="118"/>
</dbReference>
<dbReference type="IntAct" id="P76586">
    <property type="interactions" value="1"/>
</dbReference>
<dbReference type="STRING" id="511145.b2550"/>
<dbReference type="PaxDb" id="511145-b2550"/>
<dbReference type="EnsemblBacteria" id="AAC75603">
    <property type="protein sequence ID" value="AAC75603"/>
    <property type="gene ID" value="b2550"/>
</dbReference>
<dbReference type="GeneID" id="947023"/>
<dbReference type="KEGG" id="ecj:JW5406"/>
<dbReference type="KEGG" id="eco:b2550"/>
<dbReference type="KEGG" id="ecoc:C3026_14120"/>
<dbReference type="PATRIC" id="fig|1411691.4.peg.4184"/>
<dbReference type="EchoBASE" id="EB3242"/>
<dbReference type="eggNOG" id="COG1940">
    <property type="taxonomic scope" value="Bacteria"/>
</dbReference>
<dbReference type="HOGENOM" id="CLU_036604_13_5_6"/>
<dbReference type="InParanoid" id="P76586"/>
<dbReference type="OMA" id="MGIGYLY"/>
<dbReference type="OrthoDB" id="9810372at2"/>
<dbReference type="PhylomeDB" id="P76586"/>
<dbReference type="BioCyc" id="EcoCyc:G7344-MONOMER"/>
<dbReference type="PRO" id="PR:P76586"/>
<dbReference type="Proteomes" id="UP000000625">
    <property type="component" value="Chromosome"/>
</dbReference>
<dbReference type="GO" id="GO:0003677">
    <property type="term" value="F:DNA binding"/>
    <property type="evidence" value="ECO:0000318"/>
    <property type="project" value="GO_Central"/>
</dbReference>
<dbReference type="GO" id="GO:0006351">
    <property type="term" value="P:DNA-templated transcription"/>
    <property type="evidence" value="ECO:0000318"/>
    <property type="project" value="GO_Central"/>
</dbReference>
<dbReference type="CDD" id="cd24072">
    <property type="entry name" value="ASKHA_ATPase_ROK_YphH-like"/>
    <property type="match status" value="1"/>
</dbReference>
<dbReference type="Gene3D" id="3.30.420.40">
    <property type="match status" value="2"/>
</dbReference>
<dbReference type="Gene3D" id="1.10.10.10">
    <property type="entry name" value="Winged helix-like DNA-binding domain superfamily/Winged helix DNA-binding domain"/>
    <property type="match status" value="1"/>
</dbReference>
<dbReference type="InterPro" id="IPR043129">
    <property type="entry name" value="ATPase_NBD"/>
</dbReference>
<dbReference type="InterPro" id="IPR000600">
    <property type="entry name" value="ROK"/>
</dbReference>
<dbReference type="InterPro" id="IPR036388">
    <property type="entry name" value="WH-like_DNA-bd_sf"/>
</dbReference>
<dbReference type="InterPro" id="IPR036390">
    <property type="entry name" value="WH_DNA-bd_sf"/>
</dbReference>
<dbReference type="PANTHER" id="PTHR18964:SF149">
    <property type="entry name" value="BIFUNCTIONAL UDP-N-ACETYLGLUCOSAMINE 2-EPIMERASE_N-ACETYLMANNOSAMINE KINASE"/>
    <property type="match status" value="1"/>
</dbReference>
<dbReference type="PANTHER" id="PTHR18964">
    <property type="entry name" value="ROK (REPRESSOR, ORF, KINASE) FAMILY"/>
    <property type="match status" value="1"/>
</dbReference>
<dbReference type="Pfam" id="PF00480">
    <property type="entry name" value="ROK"/>
    <property type="match status" value="1"/>
</dbReference>
<dbReference type="SUPFAM" id="SSF53067">
    <property type="entry name" value="Actin-like ATPase domain"/>
    <property type="match status" value="2"/>
</dbReference>
<dbReference type="SUPFAM" id="SSF46785">
    <property type="entry name" value="Winged helix' DNA-binding domain"/>
    <property type="match status" value="1"/>
</dbReference>
<protein>
    <recommendedName>
        <fullName>Uncharacterized protein YphH</fullName>
    </recommendedName>
</protein>
<keyword id="KW-1185">Reference proteome</keyword>
<feature type="chain" id="PRO_0000095721" description="Uncharacterized protein YphH">
    <location>
        <begin position="1"/>
        <end position="397"/>
    </location>
</feature>
<name>YPHH_ECOLI</name>